<gene>
    <name type="ORF">IIV6-104L</name>
</gene>
<proteinExistence type="predicted"/>
<accession>O55723</accession>
<name>104L_IIV6</name>
<sequence>MPHYVVVKSPMRRRRSPRRRSPRVCYSPRRVACSPRRRSPRRRSPRRRSPRRSIVVY</sequence>
<dbReference type="EMBL" id="AF303741">
    <property type="protein sequence ID" value="AAB94434.1"/>
    <property type="molecule type" value="Genomic_DNA"/>
</dbReference>
<dbReference type="PIR" id="T03060">
    <property type="entry name" value="T03060"/>
</dbReference>
<dbReference type="RefSeq" id="NP_149567.1">
    <property type="nucleotide sequence ID" value="NC_003038.1"/>
</dbReference>
<dbReference type="KEGG" id="vg:1733193"/>
<dbReference type="Proteomes" id="UP000001359">
    <property type="component" value="Genome"/>
</dbReference>
<feature type="chain" id="PRO_0000377988" description="Uncharacterized protein 104L">
    <location>
        <begin position="1"/>
        <end position="57"/>
    </location>
</feature>
<feature type="region of interest" description="Disordered" evidence="1">
    <location>
        <begin position="1"/>
        <end position="57"/>
    </location>
</feature>
<feature type="compositionally biased region" description="Basic residues" evidence="1">
    <location>
        <begin position="10"/>
        <end position="22"/>
    </location>
</feature>
<feature type="compositionally biased region" description="Low complexity" evidence="1">
    <location>
        <begin position="23"/>
        <end position="34"/>
    </location>
</feature>
<feature type="compositionally biased region" description="Basic residues" evidence="1">
    <location>
        <begin position="35"/>
        <end position="51"/>
    </location>
</feature>
<evidence type="ECO:0000256" key="1">
    <source>
        <dbReference type="SAM" id="MobiDB-lite"/>
    </source>
</evidence>
<organismHost>
    <name type="scientific">Acheta domesticus</name>
    <name type="common">House cricket</name>
    <dbReference type="NCBI Taxonomy" id="6997"/>
</organismHost>
<organismHost>
    <name type="scientific">Chilo suppressalis</name>
    <name type="common">Asiatic rice borer moth</name>
    <dbReference type="NCBI Taxonomy" id="168631"/>
</organismHost>
<organismHost>
    <name type="scientific">Gryllus bimaculatus</name>
    <name type="common">Two-spotted cricket</name>
    <dbReference type="NCBI Taxonomy" id="6999"/>
</organismHost>
<organismHost>
    <name type="scientific">Gryllus campestris</name>
    <dbReference type="NCBI Taxonomy" id="58607"/>
</organismHost>
<organismHost>
    <name type="scientific">Spodoptera frugiperda</name>
    <name type="common">Fall armyworm</name>
    <dbReference type="NCBI Taxonomy" id="7108"/>
</organismHost>
<reference key="1">
    <citation type="journal article" date="2001" name="Virology">
        <title>Analysis of the first complete DNA sequence of an invertebrate iridovirus: coding strategy of the genome of Chilo iridescent virus.</title>
        <authorList>
            <person name="Jakob N.J."/>
            <person name="Mueller K."/>
            <person name="Bahr U."/>
            <person name="Darai G."/>
        </authorList>
    </citation>
    <scope>NUCLEOTIDE SEQUENCE [LARGE SCALE GENOMIC DNA]</scope>
</reference>
<reference key="2">
    <citation type="journal article" date="2007" name="Virol. J.">
        <title>Comparative genomic analysis of the family Iridoviridae: re-annotating and defining the core set of iridovirus genes.</title>
        <authorList>
            <person name="Eaton H.E."/>
            <person name="Metcalf J."/>
            <person name="Penny E."/>
            <person name="Tcherepanov V."/>
            <person name="Upton C."/>
            <person name="Brunetti C.R."/>
        </authorList>
    </citation>
    <scope>GENOME REANNOTATION</scope>
</reference>
<protein>
    <recommendedName>
        <fullName>Uncharacterized protein 104L</fullName>
    </recommendedName>
</protein>
<keyword id="KW-1185">Reference proteome</keyword>
<organism>
    <name type="scientific">Invertebrate iridescent virus 6</name>
    <name type="common">IIV-6</name>
    <name type="synonym">Chilo iridescent virus</name>
    <dbReference type="NCBI Taxonomy" id="176652"/>
    <lineage>
        <taxon>Viruses</taxon>
        <taxon>Varidnaviria</taxon>
        <taxon>Bamfordvirae</taxon>
        <taxon>Nucleocytoviricota</taxon>
        <taxon>Megaviricetes</taxon>
        <taxon>Pimascovirales</taxon>
        <taxon>Iridoviridae</taxon>
        <taxon>Betairidovirinae</taxon>
        <taxon>Iridovirus</taxon>
    </lineage>
</organism>